<feature type="chain" id="PRO_0000367718" description="Glutamate--tRNA ligase 1">
    <location>
        <begin position="1"/>
        <end position="433"/>
    </location>
</feature>
<feature type="short sequence motif" description="'HIGH' region" evidence="1">
    <location>
        <begin position="7"/>
        <end position="17"/>
    </location>
</feature>
<feature type="short sequence motif" description="'KMSKS' region" evidence="1">
    <location>
        <begin position="230"/>
        <end position="234"/>
    </location>
</feature>
<feature type="binding site" evidence="1">
    <location>
        <position position="233"/>
    </location>
    <ligand>
        <name>ATP</name>
        <dbReference type="ChEBI" id="CHEBI:30616"/>
    </ligand>
</feature>
<keyword id="KW-0030">Aminoacyl-tRNA synthetase</keyword>
<keyword id="KW-0067">ATP-binding</keyword>
<keyword id="KW-0963">Cytoplasm</keyword>
<keyword id="KW-0436">Ligase</keyword>
<keyword id="KW-0547">Nucleotide-binding</keyword>
<keyword id="KW-0648">Protein biosynthesis</keyword>
<protein>
    <recommendedName>
        <fullName evidence="1">Glutamate--tRNA ligase 1</fullName>
        <ecNumber evidence="1">6.1.1.17</ecNumber>
    </recommendedName>
    <alternativeName>
        <fullName evidence="1">Glutamyl-tRNA synthetase 1</fullName>
        <shortName evidence="1">GluRS 1</shortName>
    </alternativeName>
</protein>
<organism>
    <name type="scientific">Neorickettsia sennetsu (strain ATCC VR-367 / Miyayama)</name>
    <name type="common">Ehrlichia sennetsu</name>
    <dbReference type="NCBI Taxonomy" id="222891"/>
    <lineage>
        <taxon>Bacteria</taxon>
        <taxon>Pseudomonadati</taxon>
        <taxon>Pseudomonadota</taxon>
        <taxon>Alphaproteobacteria</taxon>
        <taxon>Rickettsiales</taxon>
        <taxon>Anaplasmataceae</taxon>
        <taxon>Neorickettsia</taxon>
    </lineage>
</organism>
<gene>
    <name evidence="1" type="primary">gltX1</name>
    <name type="ordered locus">NSE_0518</name>
</gene>
<dbReference type="EC" id="6.1.1.17" evidence="1"/>
<dbReference type="EMBL" id="CP000237">
    <property type="protein sequence ID" value="ABD46392.1"/>
    <property type="molecule type" value="Genomic_DNA"/>
</dbReference>
<dbReference type="RefSeq" id="WP_011451908.1">
    <property type="nucleotide sequence ID" value="NC_007798.1"/>
</dbReference>
<dbReference type="SMR" id="Q2GDP4"/>
<dbReference type="STRING" id="222891.NSE_0518"/>
<dbReference type="KEGG" id="nse:NSE_0518"/>
<dbReference type="eggNOG" id="COG0008">
    <property type="taxonomic scope" value="Bacteria"/>
</dbReference>
<dbReference type="HOGENOM" id="CLU_015768_6_1_5"/>
<dbReference type="OrthoDB" id="9807503at2"/>
<dbReference type="Proteomes" id="UP000001942">
    <property type="component" value="Chromosome"/>
</dbReference>
<dbReference type="GO" id="GO:0005737">
    <property type="term" value="C:cytoplasm"/>
    <property type="evidence" value="ECO:0007669"/>
    <property type="project" value="UniProtKB-SubCell"/>
</dbReference>
<dbReference type="GO" id="GO:0005524">
    <property type="term" value="F:ATP binding"/>
    <property type="evidence" value="ECO:0007669"/>
    <property type="project" value="UniProtKB-UniRule"/>
</dbReference>
<dbReference type="GO" id="GO:0004818">
    <property type="term" value="F:glutamate-tRNA ligase activity"/>
    <property type="evidence" value="ECO:0007669"/>
    <property type="project" value="UniProtKB-UniRule"/>
</dbReference>
<dbReference type="GO" id="GO:0000049">
    <property type="term" value="F:tRNA binding"/>
    <property type="evidence" value="ECO:0007669"/>
    <property type="project" value="InterPro"/>
</dbReference>
<dbReference type="GO" id="GO:0006424">
    <property type="term" value="P:glutamyl-tRNA aminoacylation"/>
    <property type="evidence" value="ECO:0007669"/>
    <property type="project" value="UniProtKB-UniRule"/>
</dbReference>
<dbReference type="Gene3D" id="1.10.10.350">
    <property type="match status" value="1"/>
</dbReference>
<dbReference type="Gene3D" id="3.40.50.620">
    <property type="entry name" value="HUPs"/>
    <property type="match status" value="1"/>
</dbReference>
<dbReference type="HAMAP" id="MF_00022">
    <property type="entry name" value="Glu_tRNA_synth_type1"/>
    <property type="match status" value="1"/>
</dbReference>
<dbReference type="InterPro" id="IPR020751">
    <property type="entry name" value="aa-tRNA-synth_I_codon-bd_sub2"/>
</dbReference>
<dbReference type="InterPro" id="IPR001412">
    <property type="entry name" value="aa-tRNA-synth_I_CS"/>
</dbReference>
<dbReference type="InterPro" id="IPR008925">
    <property type="entry name" value="aa_tRNA-synth_I_cd-bd_sf"/>
</dbReference>
<dbReference type="InterPro" id="IPR004527">
    <property type="entry name" value="Glu-tRNA-ligase_bac/mito"/>
</dbReference>
<dbReference type="InterPro" id="IPR000924">
    <property type="entry name" value="Glu/Gln-tRNA-synth"/>
</dbReference>
<dbReference type="InterPro" id="IPR020058">
    <property type="entry name" value="Glu/Gln-tRNA-synth_Ib_cat-dom"/>
</dbReference>
<dbReference type="InterPro" id="IPR049940">
    <property type="entry name" value="GluQ/Sye"/>
</dbReference>
<dbReference type="InterPro" id="IPR014729">
    <property type="entry name" value="Rossmann-like_a/b/a_fold"/>
</dbReference>
<dbReference type="PANTHER" id="PTHR43311">
    <property type="entry name" value="GLUTAMATE--TRNA LIGASE"/>
    <property type="match status" value="1"/>
</dbReference>
<dbReference type="PANTHER" id="PTHR43311:SF2">
    <property type="entry name" value="GLUTAMATE--TRNA LIGASE, MITOCHONDRIAL-RELATED"/>
    <property type="match status" value="1"/>
</dbReference>
<dbReference type="Pfam" id="PF00749">
    <property type="entry name" value="tRNA-synt_1c"/>
    <property type="match status" value="1"/>
</dbReference>
<dbReference type="PRINTS" id="PR00987">
    <property type="entry name" value="TRNASYNTHGLU"/>
</dbReference>
<dbReference type="SUPFAM" id="SSF48163">
    <property type="entry name" value="An anticodon-binding domain of class I aminoacyl-tRNA synthetases"/>
    <property type="match status" value="1"/>
</dbReference>
<dbReference type="SUPFAM" id="SSF52374">
    <property type="entry name" value="Nucleotidylyl transferase"/>
    <property type="match status" value="1"/>
</dbReference>
<dbReference type="PROSITE" id="PS00178">
    <property type="entry name" value="AA_TRNA_LIGASE_I"/>
    <property type="match status" value="1"/>
</dbReference>
<accession>Q2GDP4</accession>
<reference key="1">
    <citation type="journal article" date="2006" name="PLoS Genet.">
        <title>Comparative genomics of emerging human ehrlichiosis agents.</title>
        <authorList>
            <person name="Dunning Hotopp J.C."/>
            <person name="Lin M."/>
            <person name="Madupu R."/>
            <person name="Crabtree J."/>
            <person name="Angiuoli S.V."/>
            <person name="Eisen J.A."/>
            <person name="Seshadri R."/>
            <person name="Ren Q."/>
            <person name="Wu M."/>
            <person name="Utterback T.R."/>
            <person name="Smith S."/>
            <person name="Lewis M."/>
            <person name="Khouri H."/>
            <person name="Zhang C."/>
            <person name="Niu H."/>
            <person name="Lin Q."/>
            <person name="Ohashi N."/>
            <person name="Zhi N."/>
            <person name="Nelson W.C."/>
            <person name="Brinkac L.M."/>
            <person name="Dodson R.J."/>
            <person name="Rosovitz M.J."/>
            <person name="Sundaram J.P."/>
            <person name="Daugherty S.C."/>
            <person name="Davidsen T."/>
            <person name="Durkin A.S."/>
            <person name="Gwinn M.L."/>
            <person name="Haft D.H."/>
            <person name="Selengut J.D."/>
            <person name="Sullivan S.A."/>
            <person name="Zafar N."/>
            <person name="Zhou L."/>
            <person name="Benahmed F."/>
            <person name="Forberger H."/>
            <person name="Halpin R."/>
            <person name="Mulligan S."/>
            <person name="Robinson J."/>
            <person name="White O."/>
            <person name="Rikihisa Y."/>
            <person name="Tettelin H."/>
        </authorList>
    </citation>
    <scope>NUCLEOTIDE SEQUENCE [LARGE SCALE GENOMIC DNA]</scope>
    <source>
        <strain>ATCC VR-367 / Miyayama</strain>
    </source>
</reference>
<comment type="function">
    <text evidence="1">Catalyzes the attachment of glutamate to tRNA(Glu) in a two-step reaction: glutamate is first activated by ATP to form Glu-AMP and then transferred to the acceptor end of tRNA(Glu).</text>
</comment>
<comment type="catalytic activity">
    <reaction evidence="1">
        <text>tRNA(Glu) + L-glutamate + ATP = L-glutamyl-tRNA(Glu) + AMP + diphosphate</text>
        <dbReference type="Rhea" id="RHEA:23540"/>
        <dbReference type="Rhea" id="RHEA-COMP:9663"/>
        <dbReference type="Rhea" id="RHEA-COMP:9680"/>
        <dbReference type="ChEBI" id="CHEBI:29985"/>
        <dbReference type="ChEBI" id="CHEBI:30616"/>
        <dbReference type="ChEBI" id="CHEBI:33019"/>
        <dbReference type="ChEBI" id="CHEBI:78442"/>
        <dbReference type="ChEBI" id="CHEBI:78520"/>
        <dbReference type="ChEBI" id="CHEBI:456215"/>
        <dbReference type="EC" id="6.1.1.17"/>
    </reaction>
</comment>
<comment type="subunit">
    <text evidence="1">Monomer.</text>
</comment>
<comment type="subcellular location">
    <subcellularLocation>
        <location evidence="1">Cytoplasm</location>
    </subcellularLocation>
</comment>
<comment type="similarity">
    <text evidence="1">Belongs to the class-I aminoacyl-tRNA synthetase family. Glutamate--tRNA ligase type 1 subfamily.</text>
</comment>
<sequence>MITRFAPSPTGLIHLGNARTALIAYFAARSSGGEFILRIDDTDVTRIKSEYVNKIFTDLSWLGIKEDLCIKQSERCELYANAVVKLKESGRIYPCYETPEELEIERRSLLARALPPVYRRKNRPQHSTRLPYYRFELDPDRVVIWEDKLRGKIVIDLHSTSDPIVIRENGTYTYMLPSVVDDIECRISTIIRGEDHISNTAVQIQMFEALGCTEIPKFAHMPLLKLQTGKMSKRAGGNEIQTFRENYIEPEVICLYLLNLGSKSRSTFKNYKDYSNFNLENYSSSSSVTVLEDEIYSLNADFLRLSNYEDLARRLGGVSKTFWDAVKNNVKSIPEVNYWWEICTTEAKLYPGIGCNAQLVRDAISVLPQEEVSRETYRRWVELIVENYRYDKREVHINLRLALTGKVGGPEMAAILPFISRERILIRLNDSLS</sequence>
<proteinExistence type="inferred from homology"/>
<name>SYE1_NEOSM</name>
<evidence type="ECO:0000255" key="1">
    <source>
        <dbReference type="HAMAP-Rule" id="MF_00022"/>
    </source>
</evidence>